<sequence>MCPARSLLLVATLVLLDYLSLARNLSVATPGPEMFPCLHHSQNLLKAACNTLQKARQILEFYPCTSEEIDHEDITKDKTSTVEACLPLELIKNESCLNSRETSVITNGSCLASRKTSFMMALCLRSIYEDLKIYQVEFKTMNAKLLMDPKRQIFLDQNILGVIDELMQALNFNSETVPQKSSLEEPDFYKTKIKLCILLHAFKIRAVTIDRVMSYLNAS</sequence>
<proteinExistence type="evidence at transcript level"/>
<protein>
    <recommendedName>
        <fullName>Interleukin-12 subunit alpha</fullName>
        <shortName>IL-12A</shortName>
    </recommendedName>
    <alternativeName>
        <fullName>Cytotoxic lymphocyte maturation factor 35 kDa subunit</fullName>
        <shortName>CLMF p35</shortName>
    </alternativeName>
    <alternativeName>
        <fullName>IL-12 subunit p35</fullName>
    </alternativeName>
</protein>
<dbReference type="EMBL" id="U19835">
    <property type="protein sequence ID" value="AAA86702.1"/>
    <property type="status" value="ALT_INIT"/>
    <property type="molecule type" value="mRNA"/>
</dbReference>
<dbReference type="SMR" id="P46661"/>
<dbReference type="STRING" id="9531.ENSCATP00000037634"/>
<dbReference type="GlyCosmos" id="P46661">
    <property type="glycosylation" value="3 sites, No reported glycans"/>
</dbReference>
<dbReference type="Proteomes" id="UP000233060">
    <property type="component" value="Unassembled WGS sequence"/>
</dbReference>
<dbReference type="GO" id="GO:0005615">
    <property type="term" value="C:extracellular space"/>
    <property type="evidence" value="ECO:0007669"/>
    <property type="project" value="UniProtKB-KW"/>
</dbReference>
<dbReference type="GO" id="GO:0005125">
    <property type="term" value="F:cytokine activity"/>
    <property type="evidence" value="ECO:0007669"/>
    <property type="project" value="UniProtKB-KW"/>
</dbReference>
<dbReference type="GO" id="GO:0008083">
    <property type="term" value="F:growth factor activity"/>
    <property type="evidence" value="ECO:0007669"/>
    <property type="project" value="UniProtKB-KW"/>
</dbReference>
<dbReference type="GO" id="GO:0005143">
    <property type="term" value="F:interleukin-12 receptor binding"/>
    <property type="evidence" value="ECO:0007669"/>
    <property type="project" value="InterPro"/>
</dbReference>
<dbReference type="GO" id="GO:0006955">
    <property type="term" value="P:immune response"/>
    <property type="evidence" value="ECO:0007669"/>
    <property type="project" value="InterPro"/>
</dbReference>
<dbReference type="FunFam" id="1.20.1250.10:FF:000020">
    <property type="entry name" value="Interleukin-12 subunit alpha"/>
    <property type="match status" value="1"/>
</dbReference>
<dbReference type="Gene3D" id="1.20.1250.10">
    <property type="match status" value="1"/>
</dbReference>
<dbReference type="InterPro" id="IPR009079">
    <property type="entry name" value="4_helix_cytokine-like_core"/>
</dbReference>
<dbReference type="InterPro" id="IPR050676">
    <property type="entry name" value="IL-12"/>
</dbReference>
<dbReference type="InterPro" id="IPR004281">
    <property type="entry name" value="IL-12_alpha"/>
</dbReference>
<dbReference type="PANTHER" id="PTHR48485:SF1">
    <property type="entry name" value="INTERLEUKIN-12 SUBUNIT ALPHA"/>
    <property type="match status" value="1"/>
</dbReference>
<dbReference type="PANTHER" id="PTHR48485">
    <property type="entry name" value="INTERLEUKIN-12 SUBUNIT BETA-RELATED"/>
    <property type="match status" value="1"/>
</dbReference>
<dbReference type="Pfam" id="PF03039">
    <property type="entry name" value="IL12"/>
    <property type="match status" value="1"/>
</dbReference>
<dbReference type="SUPFAM" id="SSF47266">
    <property type="entry name" value="4-helical cytokines"/>
    <property type="match status" value="1"/>
</dbReference>
<evidence type="ECO:0000250" key="1"/>
<evidence type="ECO:0000250" key="2">
    <source>
        <dbReference type="UniProtKB" id="P29459"/>
    </source>
</evidence>
<evidence type="ECO:0000250" key="3">
    <source>
        <dbReference type="UniProtKB" id="P43431"/>
    </source>
</evidence>
<evidence type="ECO:0000255" key="4"/>
<evidence type="ECO:0000305" key="5"/>
<organism>
    <name type="scientific">Cercocebus atys</name>
    <name type="common">Sooty mangabey</name>
    <name type="synonym">Cercocebus torquatus atys</name>
    <dbReference type="NCBI Taxonomy" id="9531"/>
    <lineage>
        <taxon>Eukaryota</taxon>
        <taxon>Metazoa</taxon>
        <taxon>Chordata</taxon>
        <taxon>Craniata</taxon>
        <taxon>Vertebrata</taxon>
        <taxon>Euteleostomi</taxon>
        <taxon>Mammalia</taxon>
        <taxon>Eutheria</taxon>
        <taxon>Euarchontoglires</taxon>
        <taxon>Primates</taxon>
        <taxon>Haplorrhini</taxon>
        <taxon>Catarrhini</taxon>
        <taxon>Cercopithecidae</taxon>
        <taxon>Cercopithecinae</taxon>
        <taxon>Cercocebus</taxon>
    </lineage>
</organism>
<reference key="1">
    <citation type="journal article" date="1995" name="J. Immunol.">
        <title>Comparative sequence analysis of cytokine genes from human and nonhuman primates.</title>
        <authorList>
            <person name="Villinger F.J."/>
            <person name="Brar S.S."/>
            <person name="Mayne A.E."/>
            <person name="Chikkala N."/>
            <person name="Ansari A.A."/>
        </authorList>
    </citation>
    <scope>NUCLEOTIDE SEQUENCE [MRNA]</scope>
    <source>
        <tissue>Blood</tissue>
    </source>
</reference>
<feature type="signal peptide" evidence="1">
    <location>
        <begin position="1"/>
        <end position="22"/>
    </location>
</feature>
<feature type="chain" id="PRO_0000015601" description="Interleukin-12 subunit alpha">
    <location>
        <begin position="23"/>
        <end position="219"/>
    </location>
</feature>
<feature type="glycosylation site" description="N-linked (GlcNAc...) asparagine" evidence="4">
    <location>
        <position position="24"/>
    </location>
</feature>
<feature type="glycosylation site" description="N-linked (GlcNAc...) asparagine" evidence="4">
    <location>
        <position position="93"/>
    </location>
</feature>
<feature type="glycosylation site" description="N-linked (GlcNAc...) asparagine" evidence="4">
    <location>
        <position position="107"/>
    </location>
</feature>
<feature type="disulfide bond" evidence="2">
    <location>
        <begin position="37"/>
        <end position="110"/>
    </location>
</feature>
<feature type="disulfide bond" evidence="1">
    <location>
        <begin position="64"/>
        <end position="196"/>
    </location>
</feature>
<feature type="disulfide bond" evidence="1">
    <location>
        <begin position="85"/>
        <end position="123"/>
    </location>
</feature>
<feature type="disulfide bond" description="Interchain (with C-199 in IL12B)" evidence="1">
    <location>
        <position position="96"/>
    </location>
</feature>
<gene>
    <name type="primary">IL12A</name>
</gene>
<comment type="function">
    <text evidence="2 3">Heterodimerizes with IL12B to form the IL-12 cytokine or with EBI3/IL27B to form the IL-35 cytokine. IL-12 is primarily produced by professional antigen-presenting cells (APCs) such as B-cells and dendritic cells (DCs) as well as macrophages and granulocytes and regulates T-cell and natural killer-cell responses, induces the production of interferon-gamma (IFN-gamma), favors the differentiation of T-helper 1 (Th1) cells and is an important link between innate resistance and adaptive immunity. Mechanistically, exerts its biological effects through a receptor composed of IL12R1 and IL12R2 subunits. Binding to the receptor results in the rapid tyrosine phosphorylation of a number of cellular substrates including the JAK family kinases TYK2 and JAK2. In turn, recruited STAT4 gets phosphorylated and translocates to the nucleus where it regulates cytokine/growth factor responsive genes (By similarity). As part of IL-35, plays essential roles in maintaining the immune homeostasis of the liver microenvironment and also functions as an immune-suppressive cytokine (By similarity). Mediates biological events through unconventional receptors composed of IL12RB2 and gp130/IL6ST heterodimers or homodimers. Signaling requires the transcription factors STAT1 and STAT4, which form a unique heterodimer that binds to distinct DNA sites (By similarity).</text>
</comment>
<comment type="subunit">
    <text evidence="2 3">Heterodimer with IL12B; disulfide-linked. This heterodimer is known as interleukin IL-12. Heterodimer with EBI3/IL27B; not disulfide-linked. This heterodimer is known as interleukin IL-35. Interacts with NBR1; this interaction promotes IL-12 secretion (By similarity).</text>
</comment>
<comment type="subcellular location">
    <subcellularLocation>
        <location evidence="2">Secreted</location>
    </subcellularLocation>
</comment>
<comment type="similarity">
    <text evidence="5">Belongs to the IL-6 superfamily.</text>
</comment>
<comment type="sequence caution" evidence="5">
    <conflict type="erroneous initiation">
        <sequence resource="EMBL-CDS" id="AAA86702"/>
    </conflict>
</comment>
<keyword id="KW-0202">Cytokine</keyword>
<keyword id="KW-1015">Disulfide bond</keyword>
<keyword id="KW-0325">Glycoprotein</keyword>
<keyword id="KW-0339">Growth factor</keyword>
<keyword id="KW-1185">Reference proteome</keyword>
<keyword id="KW-0964">Secreted</keyword>
<keyword id="KW-0732">Signal</keyword>
<name>IL12A_CERAT</name>
<accession>P46661</accession>